<sequence>MGVELAFPKVVGKQVYGSLYDCDENVLKDTKRLEQIIKEAADVGNMNILDIKSWKIGEGVSVVAIILESHITIHTWPEYKFATVDVYSCGPHTSPLKAFNYIVEKLGAKKYTINEADRSSEF</sequence>
<comment type="function">
    <text evidence="1">Catalyzes the decarboxylation of S-adenosylmethionine to S-adenosylmethioninamine (dcAdoMet), the propylamine donor required for the synthesis of the polyamines spermine and spermidine from the diamine putrescine.</text>
</comment>
<comment type="catalytic activity">
    <reaction evidence="1">
        <text>S-adenosyl-L-methionine + H(+) = S-adenosyl 3-(methylsulfanyl)propylamine + CO2</text>
        <dbReference type="Rhea" id="RHEA:15981"/>
        <dbReference type="ChEBI" id="CHEBI:15378"/>
        <dbReference type="ChEBI" id="CHEBI:16526"/>
        <dbReference type="ChEBI" id="CHEBI:57443"/>
        <dbReference type="ChEBI" id="CHEBI:59789"/>
        <dbReference type="EC" id="4.1.1.50"/>
    </reaction>
</comment>
<comment type="cofactor">
    <cofactor evidence="1">
        <name>pyruvate</name>
        <dbReference type="ChEBI" id="CHEBI:15361"/>
    </cofactor>
    <text evidence="1">Binds 1 pyruvoyl group covalently per subunit.</text>
</comment>
<comment type="pathway">
    <text evidence="1">Amine and polyamine biosynthesis; S-adenosylmethioninamine biosynthesis; S-adenosylmethioninamine from S-adenosyl-L-methionine: step 1/1.</text>
</comment>
<comment type="subunit">
    <text evidence="1">Heterotetramer of two alpha and two beta chains arranged as a dimer of alpha/beta heterodimers.</text>
</comment>
<comment type="PTM">
    <text evidence="1">Is synthesized initially as an inactive proenzyme. Formation of the active enzyme involves a self-maturation process in which the active site pyruvoyl group is generated from an internal serine residue via an autocatalytic post-translational modification. Two non-identical subunits are generated from the proenzyme in this reaction, and the pyruvate is formed at the N-terminus of the alpha chain, which is derived from the carboxyl end of the proenzyme. The post-translation cleavage follows an unusual pathway, termed non-hydrolytic serinolysis, in which the side chain hydroxyl group of the serine supplies its oxygen atom to form the C-terminus of the beta chain, while the remainder of the serine residue undergoes an oxidative deamination to produce ammonia and the pyruvoyl group blocking the N-terminus of the alpha chain.</text>
</comment>
<comment type="similarity">
    <text evidence="1">Belongs to the prokaryotic AdoMetDC family. Type 1 subfamily.</text>
</comment>
<gene>
    <name evidence="1" type="primary">speH</name>
    <name type="ordered locus">M164_1543</name>
</gene>
<dbReference type="EC" id="4.1.1.50" evidence="1"/>
<dbReference type="EMBL" id="CP001402">
    <property type="protein sequence ID" value="ACR42144.1"/>
    <property type="molecule type" value="Genomic_DNA"/>
</dbReference>
<dbReference type="SMR" id="C4KHT0"/>
<dbReference type="KEGG" id="sid:M164_1543"/>
<dbReference type="HOGENOM" id="CLU_125470_2_1_2"/>
<dbReference type="UniPathway" id="UPA00331">
    <property type="reaction ID" value="UER00451"/>
</dbReference>
<dbReference type="Proteomes" id="UP000001479">
    <property type="component" value="Chromosome"/>
</dbReference>
<dbReference type="GO" id="GO:0005829">
    <property type="term" value="C:cytosol"/>
    <property type="evidence" value="ECO:0007669"/>
    <property type="project" value="TreeGrafter"/>
</dbReference>
<dbReference type="GO" id="GO:0004014">
    <property type="term" value="F:adenosylmethionine decarboxylase activity"/>
    <property type="evidence" value="ECO:0007669"/>
    <property type="project" value="UniProtKB-UniRule"/>
</dbReference>
<dbReference type="GO" id="GO:0008295">
    <property type="term" value="P:spermidine biosynthetic process"/>
    <property type="evidence" value="ECO:0007669"/>
    <property type="project" value="UniProtKB-UniRule"/>
</dbReference>
<dbReference type="FunFam" id="3.60.90.10:FF:000005">
    <property type="entry name" value="Arginine decarboxylase proenzyme"/>
    <property type="match status" value="1"/>
</dbReference>
<dbReference type="Gene3D" id="3.60.90.10">
    <property type="entry name" value="S-adenosylmethionine decarboxylase"/>
    <property type="match status" value="1"/>
</dbReference>
<dbReference type="HAMAP" id="MF_00464">
    <property type="entry name" value="AdoMetDC_1"/>
    <property type="match status" value="1"/>
</dbReference>
<dbReference type="InterPro" id="IPR003826">
    <property type="entry name" value="AdoMetDC_fam_prok"/>
</dbReference>
<dbReference type="InterPro" id="IPR016067">
    <property type="entry name" value="S-AdoMet_deCO2ase_core"/>
</dbReference>
<dbReference type="InterPro" id="IPR017716">
    <property type="entry name" value="S-AdoMet_deCOase_pro-enz"/>
</dbReference>
<dbReference type="NCBIfam" id="TIGR03330">
    <property type="entry name" value="SAM_DCase_Bsu"/>
    <property type="match status" value="1"/>
</dbReference>
<dbReference type="PANTHER" id="PTHR33866">
    <property type="entry name" value="S-ADENOSYLMETHIONINE DECARBOXYLASE PROENZYME"/>
    <property type="match status" value="1"/>
</dbReference>
<dbReference type="PANTHER" id="PTHR33866:SF2">
    <property type="entry name" value="S-ADENOSYLMETHIONINE DECARBOXYLASE PROENZYME"/>
    <property type="match status" value="1"/>
</dbReference>
<dbReference type="Pfam" id="PF02675">
    <property type="entry name" value="AdoMet_dc"/>
    <property type="match status" value="1"/>
</dbReference>
<dbReference type="SUPFAM" id="SSF56276">
    <property type="entry name" value="S-adenosylmethionine decarboxylase"/>
    <property type="match status" value="1"/>
</dbReference>
<reference key="1">
    <citation type="journal article" date="2009" name="Proc. Natl. Acad. Sci. U.S.A.">
        <title>Biogeography of the Sulfolobus islandicus pan-genome.</title>
        <authorList>
            <person name="Reno M.L."/>
            <person name="Held N.L."/>
            <person name="Fields C.J."/>
            <person name="Burke P.V."/>
            <person name="Whitaker R.J."/>
        </authorList>
    </citation>
    <scope>NUCLEOTIDE SEQUENCE [LARGE SCALE GENOMIC DNA]</scope>
    <source>
        <strain>M.16.4 / Kamchatka #3</strain>
    </source>
</reference>
<accession>C4KHT0</accession>
<evidence type="ECO:0000255" key="1">
    <source>
        <dbReference type="HAMAP-Rule" id="MF_00464"/>
    </source>
</evidence>
<proteinExistence type="inferred from homology"/>
<feature type="chain" id="PRO_1000206310" description="S-adenosylmethionine decarboxylase beta chain" evidence="1">
    <location>
        <begin position="1"/>
        <end position="68"/>
    </location>
</feature>
<feature type="chain" id="PRO_1000206311" description="S-adenosylmethionine decarboxylase alpha chain" evidence="1">
    <location>
        <begin position="69"/>
        <end position="122"/>
    </location>
</feature>
<feature type="active site" description="Schiff-base intermediate with substrate; via pyruvic acid" evidence="1">
    <location>
        <position position="69"/>
    </location>
</feature>
<feature type="active site" description="Proton acceptor; for processing activity" evidence="1">
    <location>
        <position position="74"/>
    </location>
</feature>
<feature type="active site" description="Proton donor; for catalytic activity" evidence="1">
    <location>
        <position position="89"/>
    </location>
</feature>
<feature type="site" description="Cleavage (non-hydrolytic); by autolysis" evidence="1">
    <location>
        <begin position="68"/>
        <end position="69"/>
    </location>
</feature>
<feature type="modified residue" description="Pyruvic acid (Ser); by autocatalysis" evidence="1">
    <location>
        <position position="69"/>
    </location>
</feature>
<protein>
    <recommendedName>
        <fullName evidence="1">S-adenosylmethionine decarboxylase proenzyme</fullName>
        <shortName evidence="1">AdoMetDC</shortName>
        <shortName evidence="1">SAMDC</shortName>
        <ecNumber evidence="1">4.1.1.50</ecNumber>
    </recommendedName>
    <component>
        <recommendedName>
            <fullName evidence="1">S-adenosylmethionine decarboxylase beta chain</fullName>
        </recommendedName>
    </component>
    <component>
        <recommendedName>
            <fullName evidence="1">S-adenosylmethionine decarboxylase alpha chain</fullName>
        </recommendedName>
    </component>
</protein>
<organism>
    <name type="scientific">Saccharolobus islandicus (strain M.16.4 / Kamchatka #3)</name>
    <name type="common">Sulfolobus islandicus</name>
    <dbReference type="NCBI Taxonomy" id="426118"/>
    <lineage>
        <taxon>Archaea</taxon>
        <taxon>Thermoproteota</taxon>
        <taxon>Thermoprotei</taxon>
        <taxon>Sulfolobales</taxon>
        <taxon>Sulfolobaceae</taxon>
        <taxon>Saccharolobus</taxon>
    </lineage>
</organism>
<keyword id="KW-0068">Autocatalytic cleavage</keyword>
<keyword id="KW-0210">Decarboxylase</keyword>
<keyword id="KW-0456">Lyase</keyword>
<keyword id="KW-0620">Polyamine biosynthesis</keyword>
<keyword id="KW-0670">Pyruvate</keyword>
<keyword id="KW-0949">S-adenosyl-L-methionine</keyword>
<keyword id="KW-0704">Schiff base</keyword>
<keyword id="KW-0745">Spermidine biosynthesis</keyword>
<keyword id="KW-0865">Zymogen</keyword>
<name>SPEH_SACI6</name>